<gene>
    <name evidence="1" type="primary">rplY</name>
    <name evidence="1" type="synonym">ctc</name>
    <name type="ordered locus">BMASAVP1_A0089</name>
</gene>
<dbReference type="EMBL" id="CP000526">
    <property type="protein sequence ID" value="ABM51801.1"/>
    <property type="molecule type" value="Genomic_DNA"/>
</dbReference>
<dbReference type="RefSeq" id="WP_004200150.1">
    <property type="nucleotide sequence ID" value="NC_008785.1"/>
</dbReference>
<dbReference type="SMR" id="A1UZN7"/>
<dbReference type="KEGG" id="bmv:BMASAVP1_A0089"/>
<dbReference type="HOGENOM" id="CLU_075939_0_1_4"/>
<dbReference type="GO" id="GO:0022625">
    <property type="term" value="C:cytosolic large ribosomal subunit"/>
    <property type="evidence" value="ECO:0007669"/>
    <property type="project" value="TreeGrafter"/>
</dbReference>
<dbReference type="GO" id="GO:0008097">
    <property type="term" value="F:5S rRNA binding"/>
    <property type="evidence" value="ECO:0007669"/>
    <property type="project" value="InterPro"/>
</dbReference>
<dbReference type="GO" id="GO:0003735">
    <property type="term" value="F:structural constituent of ribosome"/>
    <property type="evidence" value="ECO:0007669"/>
    <property type="project" value="InterPro"/>
</dbReference>
<dbReference type="GO" id="GO:0006412">
    <property type="term" value="P:translation"/>
    <property type="evidence" value="ECO:0007669"/>
    <property type="project" value="UniProtKB-UniRule"/>
</dbReference>
<dbReference type="CDD" id="cd00495">
    <property type="entry name" value="Ribosomal_L25_TL5_CTC"/>
    <property type="match status" value="1"/>
</dbReference>
<dbReference type="Gene3D" id="2.170.120.20">
    <property type="entry name" value="Ribosomal protein L25, beta domain"/>
    <property type="match status" value="1"/>
</dbReference>
<dbReference type="Gene3D" id="2.40.240.10">
    <property type="entry name" value="Ribosomal Protein L25, Chain P"/>
    <property type="match status" value="1"/>
</dbReference>
<dbReference type="HAMAP" id="MF_01334">
    <property type="entry name" value="Ribosomal_bL25_CTC"/>
    <property type="match status" value="1"/>
</dbReference>
<dbReference type="InterPro" id="IPR020056">
    <property type="entry name" value="Rbsml_bL25/Gln-tRNA_synth_N"/>
</dbReference>
<dbReference type="InterPro" id="IPR011035">
    <property type="entry name" value="Ribosomal_bL25/Gln-tRNA_synth"/>
</dbReference>
<dbReference type="InterPro" id="IPR020057">
    <property type="entry name" value="Ribosomal_bL25_b-dom"/>
</dbReference>
<dbReference type="InterPro" id="IPR037121">
    <property type="entry name" value="Ribosomal_bL25_C"/>
</dbReference>
<dbReference type="InterPro" id="IPR001021">
    <property type="entry name" value="Ribosomal_bL25_long"/>
</dbReference>
<dbReference type="InterPro" id="IPR029751">
    <property type="entry name" value="Ribosomal_L25_dom"/>
</dbReference>
<dbReference type="InterPro" id="IPR020930">
    <property type="entry name" value="Ribosomal_uL5_bac-type"/>
</dbReference>
<dbReference type="NCBIfam" id="TIGR00731">
    <property type="entry name" value="bL25_bact_ctc"/>
    <property type="match status" value="1"/>
</dbReference>
<dbReference type="NCBIfam" id="NF004128">
    <property type="entry name" value="PRK05618.1-2"/>
    <property type="match status" value="1"/>
</dbReference>
<dbReference type="NCBIfam" id="NF004130">
    <property type="entry name" value="PRK05618.1-5"/>
    <property type="match status" value="1"/>
</dbReference>
<dbReference type="NCBIfam" id="NF004612">
    <property type="entry name" value="PRK05943.1"/>
    <property type="match status" value="1"/>
</dbReference>
<dbReference type="PANTHER" id="PTHR33284">
    <property type="entry name" value="RIBOSOMAL PROTEIN L25/GLN-TRNA SYNTHETASE, ANTI-CODON-BINDING DOMAIN-CONTAINING PROTEIN"/>
    <property type="match status" value="1"/>
</dbReference>
<dbReference type="PANTHER" id="PTHR33284:SF1">
    <property type="entry name" value="RIBOSOMAL PROTEIN L25_GLN-TRNA SYNTHETASE, ANTI-CODON-BINDING DOMAIN-CONTAINING PROTEIN"/>
    <property type="match status" value="1"/>
</dbReference>
<dbReference type="Pfam" id="PF01386">
    <property type="entry name" value="Ribosomal_L25p"/>
    <property type="match status" value="1"/>
</dbReference>
<dbReference type="Pfam" id="PF14693">
    <property type="entry name" value="Ribosomal_TL5_C"/>
    <property type="match status" value="1"/>
</dbReference>
<dbReference type="SUPFAM" id="SSF50715">
    <property type="entry name" value="Ribosomal protein L25-like"/>
    <property type="match status" value="1"/>
</dbReference>
<proteinExistence type="inferred from homology"/>
<evidence type="ECO:0000255" key="1">
    <source>
        <dbReference type="HAMAP-Rule" id="MF_01334"/>
    </source>
</evidence>
<evidence type="ECO:0000305" key="2"/>
<name>RL25_BURMS</name>
<accession>A1UZN7</accession>
<sequence length="204" mass="21940">MKVVAFERQQQGTGASRRLRNAGKTTGIVYGGEAAPQMIELDHNALWHALKKEAFHSSILDLEVAGKSQRVLLRDVQYHPFRQLVLHVDFQRIDPKKKLHTKAPLHFLNAETSPAVKLSSAVVSHVVTEIEIECLPADLPEFLEVDLSKIEAGQSLHAKDIALPNGVALTAHVDAENPVIASATIPAGAVSDEAAAGEGETPAA</sequence>
<comment type="function">
    <text evidence="1">This is one of the proteins that binds to the 5S RNA in the ribosome where it forms part of the central protuberance.</text>
</comment>
<comment type="subunit">
    <text evidence="1">Part of the 50S ribosomal subunit; part of the 5S rRNA/L5/L18/L25 subcomplex. Contacts the 5S rRNA. Binds to the 5S rRNA independently of L5 and L18.</text>
</comment>
<comment type="similarity">
    <text evidence="1">Belongs to the bacterial ribosomal protein bL25 family. CTC subfamily.</text>
</comment>
<keyword id="KW-0687">Ribonucleoprotein</keyword>
<keyword id="KW-0689">Ribosomal protein</keyword>
<keyword id="KW-0694">RNA-binding</keyword>
<keyword id="KW-0699">rRNA-binding</keyword>
<feature type="chain" id="PRO_1000052874" description="Large ribosomal subunit protein bL25">
    <location>
        <begin position="1"/>
        <end position="204"/>
    </location>
</feature>
<protein>
    <recommendedName>
        <fullName evidence="1">Large ribosomal subunit protein bL25</fullName>
    </recommendedName>
    <alternativeName>
        <fullName evidence="2">50S ribosomal protein L25</fullName>
    </alternativeName>
    <alternativeName>
        <fullName evidence="1">General stress protein CTC</fullName>
    </alternativeName>
</protein>
<organism>
    <name type="scientific">Burkholderia mallei (strain SAVP1)</name>
    <dbReference type="NCBI Taxonomy" id="320388"/>
    <lineage>
        <taxon>Bacteria</taxon>
        <taxon>Pseudomonadati</taxon>
        <taxon>Pseudomonadota</taxon>
        <taxon>Betaproteobacteria</taxon>
        <taxon>Burkholderiales</taxon>
        <taxon>Burkholderiaceae</taxon>
        <taxon>Burkholderia</taxon>
        <taxon>pseudomallei group</taxon>
    </lineage>
</organism>
<reference key="1">
    <citation type="journal article" date="2010" name="Genome Biol. Evol.">
        <title>Continuing evolution of Burkholderia mallei through genome reduction and large-scale rearrangements.</title>
        <authorList>
            <person name="Losada L."/>
            <person name="Ronning C.M."/>
            <person name="DeShazer D."/>
            <person name="Woods D."/>
            <person name="Fedorova N."/>
            <person name="Kim H.S."/>
            <person name="Shabalina S.A."/>
            <person name="Pearson T.R."/>
            <person name="Brinkac L."/>
            <person name="Tan P."/>
            <person name="Nandi T."/>
            <person name="Crabtree J."/>
            <person name="Badger J."/>
            <person name="Beckstrom-Sternberg S."/>
            <person name="Saqib M."/>
            <person name="Schutzer S.E."/>
            <person name="Keim P."/>
            <person name="Nierman W.C."/>
        </authorList>
    </citation>
    <scope>NUCLEOTIDE SEQUENCE [LARGE SCALE GENOMIC DNA]</scope>
    <source>
        <strain>SAVP1</strain>
    </source>
</reference>